<reference evidence="4" key="1">
    <citation type="submission" date="2004-06" db="EMBL/GenBank/DDBJ databases">
        <authorList>
            <person name="Zhang Q."/>
            <person name="Anderson R.E."/>
        </authorList>
    </citation>
    <scope>NUCLEOTIDE SEQUENCE [MRNA]</scope>
    <source>
        <strain evidence="4">Sprague-Dawley</strain>
        <tissue evidence="4">Retina</tissue>
    </source>
</reference>
<keyword id="KW-0175">Coiled coil</keyword>
<keyword id="KW-1015">Disulfide bond</keyword>
<keyword id="KW-0325">Glycoprotein</keyword>
<keyword id="KW-1185">Reference proteome</keyword>
<keyword id="KW-0964">Secreted</keyword>
<keyword id="KW-0732">Signal</keyword>
<evidence type="ECO:0000250" key="1">
    <source>
        <dbReference type="UniProtKB" id="P10909"/>
    </source>
</evidence>
<evidence type="ECO:0000255" key="2"/>
<evidence type="ECO:0000305" key="3"/>
<evidence type="ECO:0000312" key="4">
    <source>
        <dbReference type="EMBL" id="AAT81476.1"/>
    </source>
</evidence>
<name>CLUL1_RAT</name>
<comment type="subcellular location">
    <subcellularLocation>
        <location evidence="3">Secreted</location>
    </subcellularLocation>
</comment>
<comment type="similarity">
    <text evidence="2">Belongs to the clusterin family.</text>
</comment>
<sequence>MQPPLFVISVYLLWLKYCDSAPTWKETDATDGNLKSLPEVGEADVEGEVKKALIGIKQMKIMMERREEEHAKLMKALKKCKEEKQEAQKLMNEVQERLEEEEKLCQASSIGSWDGCRPCLESNCIRFYTACQPGWSSVKSMMKQFLKKIYRFLSSQSEDVKDPPAIEQLTKEDLQVVHIENLFSQLAVDAKSLFNMSFYIFKQMQQEFDQAFQLYFMSDVDLMEPYPPALSKEITKKEELGQRWGIPNVFQLFHNFSLSVYGRVQQIIMKTLNAIEDSWEPHKELDQRGMTSEMLPEQNGEMCEEFVKNLSGCLKFRKRCQKCHNYLSEECPDVPELHIEFLEALKLVNVSNQQYDQIVQMTQYHLEDTIYLMEKMQEQFGWVSQLASHNPVTEDIFNSTKAVPKIHGGDSSKQDEIMVDSSSILPSSNFTVQNPPEEGAESSNVIYYMAAKVLQHLKGCFETW</sequence>
<organism>
    <name type="scientific">Rattus norvegicus</name>
    <name type="common">Rat</name>
    <dbReference type="NCBI Taxonomy" id="10116"/>
    <lineage>
        <taxon>Eukaryota</taxon>
        <taxon>Metazoa</taxon>
        <taxon>Chordata</taxon>
        <taxon>Craniata</taxon>
        <taxon>Vertebrata</taxon>
        <taxon>Euteleostomi</taxon>
        <taxon>Mammalia</taxon>
        <taxon>Eutheria</taxon>
        <taxon>Euarchontoglires</taxon>
        <taxon>Glires</taxon>
        <taxon>Rodentia</taxon>
        <taxon>Myomorpha</taxon>
        <taxon>Muroidea</taxon>
        <taxon>Muridae</taxon>
        <taxon>Murinae</taxon>
        <taxon>Rattus</taxon>
    </lineage>
</organism>
<accession>Q3ZRW7</accession>
<proteinExistence type="evidence at transcript level"/>
<feature type="signal peptide" evidence="2">
    <location>
        <begin position="1"/>
        <end position="20"/>
    </location>
</feature>
<feature type="chain" id="PRO_0000270979" description="Clusterin-like protein 1" evidence="2">
    <location>
        <begin position="21"/>
        <end position="464"/>
    </location>
</feature>
<feature type="coiled-coil region" evidence="2">
    <location>
        <begin position="56"/>
        <end position="109"/>
    </location>
</feature>
<feature type="glycosylation site" description="N-linked (GlcNAc...) asparagine" evidence="2">
    <location>
        <position position="195"/>
    </location>
</feature>
<feature type="glycosylation site" description="N-linked (GlcNAc...) asparagine" evidence="2">
    <location>
        <position position="255"/>
    </location>
</feature>
<feature type="glycosylation site" description="N-linked (GlcNAc...) asparagine" evidence="2">
    <location>
        <position position="309"/>
    </location>
</feature>
<feature type="glycosylation site" description="N-linked (GlcNAc...) asparagine" evidence="2">
    <location>
        <position position="349"/>
    </location>
</feature>
<feature type="glycosylation site" description="N-linked (GlcNAc...) asparagine" evidence="2">
    <location>
        <position position="398"/>
    </location>
</feature>
<feature type="glycosylation site" description="N-linked (GlcNAc...) asparagine" evidence="2">
    <location>
        <position position="429"/>
    </location>
</feature>
<feature type="disulfide bond" evidence="1">
    <location>
        <begin position="105"/>
        <end position="331"/>
    </location>
</feature>
<feature type="disulfide bond" evidence="1">
    <location>
        <begin position="116"/>
        <end position="323"/>
    </location>
</feature>
<feature type="disulfide bond" evidence="1">
    <location>
        <begin position="119"/>
        <end position="320"/>
    </location>
</feature>
<feature type="disulfide bond" evidence="1">
    <location>
        <begin position="124"/>
        <end position="313"/>
    </location>
</feature>
<feature type="disulfide bond" evidence="1">
    <location>
        <begin position="131"/>
        <end position="303"/>
    </location>
</feature>
<dbReference type="EMBL" id="AY655707">
    <property type="protein sequence ID" value="AAT81476.1"/>
    <property type="molecule type" value="mRNA"/>
</dbReference>
<dbReference type="RefSeq" id="NP_001028243.1">
    <property type="nucleotide sequence ID" value="NM_001033071.1"/>
</dbReference>
<dbReference type="SMR" id="Q3ZRW7"/>
<dbReference type="FunCoup" id="Q3ZRW7">
    <property type="interactions" value="184"/>
</dbReference>
<dbReference type="STRING" id="10116.ENSRNOP00000070864"/>
<dbReference type="GlyCosmos" id="Q3ZRW7">
    <property type="glycosylation" value="6 sites, No reported glycans"/>
</dbReference>
<dbReference type="GlyGen" id="Q3ZRW7">
    <property type="glycosylation" value="6 sites"/>
</dbReference>
<dbReference type="PhosphoSitePlus" id="Q3ZRW7"/>
<dbReference type="GeneID" id="367345"/>
<dbReference type="KEGG" id="rno:367345"/>
<dbReference type="UCSC" id="RGD:1306852">
    <property type="organism name" value="rat"/>
</dbReference>
<dbReference type="AGR" id="RGD:1306852"/>
<dbReference type="CTD" id="27098"/>
<dbReference type="RGD" id="1306852">
    <property type="gene designation" value="Clul1"/>
</dbReference>
<dbReference type="InParanoid" id="Q3ZRW7"/>
<dbReference type="OrthoDB" id="58264at9989"/>
<dbReference type="PhylomeDB" id="Q3ZRW7"/>
<dbReference type="PRO" id="PR:Q3ZRW7"/>
<dbReference type="Proteomes" id="UP000002494">
    <property type="component" value="Unplaced"/>
</dbReference>
<dbReference type="GO" id="GO:0005615">
    <property type="term" value="C:extracellular space"/>
    <property type="evidence" value="ECO:0000318"/>
    <property type="project" value="GO_Central"/>
</dbReference>
<dbReference type="GO" id="GO:0005634">
    <property type="term" value="C:nucleus"/>
    <property type="evidence" value="ECO:0000318"/>
    <property type="project" value="GO_Central"/>
</dbReference>
<dbReference type="GO" id="GO:0051787">
    <property type="term" value="F:misfolded protein binding"/>
    <property type="evidence" value="ECO:0000318"/>
    <property type="project" value="GO_Central"/>
</dbReference>
<dbReference type="InterPro" id="IPR000753">
    <property type="entry name" value="Clusterin-like"/>
</dbReference>
<dbReference type="InterPro" id="IPR016015">
    <property type="entry name" value="Clusterin_C"/>
</dbReference>
<dbReference type="InterPro" id="IPR016014">
    <property type="entry name" value="Clusterin_N"/>
</dbReference>
<dbReference type="PANTHER" id="PTHR10970">
    <property type="entry name" value="CLUSTERIN"/>
    <property type="match status" value="1"/>
</dbReference>
<dbReference type="PANTHER" id="PTHR10970:SF2">
    <property type="entry name" value="CLUSTERIN-LIKE PROTEIN 1"/>
    <property type="match status" value="1"/>
</dbReference>
<dbReference type="Pfam" id="PF01093">
    <property type="entry name" value="Clusterin"/>
    <property type="match status" value="1"/>
</dbReference>
<dbReference type="SMART" id="SM00035">
    <property type="entry name" value="CLa"/>
    <property type="match status" value="1"/>
</dbReference>
<dbReference type="SMART" id="SM00030">
    <property type="entry name" value="CLb"/>
    <property type="match status" value="1"/>
</dbReference>
<gene>
    <name evidence="4" type="primary">Clul1</name>
</gene>
<protein>
    <recommendedName>
        <fullName>Clusterin-like protein 1</fullName>
    </recommendedName>
</protein>